<gene>
    <name evidence="1" type="primary">rps13p</name>
    <name type="ordered locus">APE_1737.1</name>
</gene>
<reference key="1">
    <citation type="journal article" date="1999" name="DNA Res.">
        <title>Complete genome sequence of an aerobic hyper-thermophilic crenarchaeon, Aeropyrum pernix K1.</title>
        <authorList>
            <person name="Kawarabayasi Y."/>
            <person name="Hino Y."/>
            <person name="Horikawa H."/>
            <person name="Yamazaki S."/>
            <person name="Haikawa Y."/>
            <person name="Jin-no K."/>
            <person name="Takahashi M."/>
            <person name="Sekine M."/>
            <person name="Baba S."/>
            <person name="Ankai A."/>
            <person name="Kosugi H."/>
            <person name="Hosoyama A."/>
            <person name="Fukui S."/>
            <person name="Nagai Y."/>
            <person name="Nishijima K."/>
            <person name="Nakazawa H."/>
            <person name="Takamiya M."/>
            <person name="Masuda S."/>
            <person name="Funahashi T."/>
            <person name="Tanaka T."/>
            <person name="Kudoh Y."/>
            <person name="Yamazaki J."/>
            <person name="Kushida N."/>
            <person name="Oguchi A."/>
            <person name="Aoki K."/>
            <person name="Kubota K."/>
            <person name="Nakamura Y."/>
            <person name="Nomura N."/>
            <person name="Sako Y."/>
            <person name="Kikuchi H."/>
        </authorList>
    </citation>
    <scope>NUCLEOTIDE SEQUENCE [LARGE SCALE GENOMIC DNA]</scope>
    <source>
        <strain>ATCC 700893 / DSM 11879 / JCM 9820 / NBRC 100138 / K1</strain>
    </source>
</reference>
<organism>
    <name type="scientific">Aeropyrum pernix (strain ATCC 700893 / DSM 11879 / JCM 9820 / NBRC 100138 / K1)</name>
    <dbReference type="NCBI Taxonomy" id="272557"/>
    <lineage>
        <taxon>Archaea</taxon>
        <taxon>Thermoproteota</taxon>
        <taxon>Thermoprotei</taxon>
        <taxon>Desulfurococcales</taxon>
        <taxon>Desulfurococcaceae</taxon>
        <taxon>Aeropyrum</taxon>
    </lineage>
</organism>
<dbReference type="EMBL" id="BA000002">
    <property type="protein sequence ID" value="BAA80738.2"/>
    <property type="molecule type" value="Genomic_DNA"/>
</dbReference>
<dbReference type="PIR" id="E72556">
    <property type="entry name" value="E72556"/>
</dbReference>
<dbReference type="RefSeq" id="WP_010866564.1">
    <property type="nucleotide sequence ID" value="NC_000854.2"/>
</dbReference>
<dbReference type="SMR" id="Q9YB60"/>
<dbReference type="STRING" id="272557.APE_1737.1"/>
<dbReference type="EnsemblBacteria" id="BAA80738">
    <property type="protein sequence ID" value="BAA80738"/>
    <property type="gene ID" value="APE_1737.1"/>
</dbReference>
<dbReference type="GeneID" id="1446208"/>
<dbReference type="KEGG" id="ape:APE_1737.1"/>
<dbReference type="PATRIC" id="fig|272557.25.peg.1169"/>
<dbReference type="eggNOG" id="arCOG01722">
    <property type="taxonomic scope" value="Archaea"/>
</dbReference>
<dbReference type="Proteomes" id="UP000002518">
    <property type="component" value="Chromosome"/>
</dbReference>
<dbReference type="GO" id="GO:0005829">
    <property type="term" value="C:cytosol"/>
    <property type="evidence" value="ECO:0007669"/>
    <property type="project" value="TreeGrafter"/>
</dbReference>
<dbReference type="GO" id="GO:0015935">
    <property type="term" value="C:small ribosomal subunit"/>
    <property type="evidence" value="ECO:0007669"/>
    <property type="project" value="TreeGrafter"/>
</dbReference>
<dbReference type="GO" id="GO:0019843">
    <property type="term" value="F:rRNA binding"/>
    <property type="evidence" value="ECO:0007669"/>
    <property type="project" value="UniProtKB-UniRule"/>
</dbReference>
<dbReference type="GO" id="GO:0003735">
    <property type="term" value="F:structural constituent of ribosome"/>
    <property type="evidence" value="ECO:0007669"/>
    <property type="project" value="InterPro"/>
</dbReference>
<dbReference type="GO" id="GO:0006412">
    <property type="term" value="P:translation"/>
    <property type="evidence" value="ECO:0007669"/>
    <property type="project" value="UniProtKB-UniRule"/>
</dbReference>
<dbReference type="FunFam" id="1.10.8.50:FF:000001">
    <property type="entry name" value="30S ribosomal protein S13"/>
    <property type="match status" value="1"/>
</dbReference>
<dbReference type="FunFam" id="4.10.910.10:FF:000002">
    <property type="entry name" value="40S ribosomal protein S18"/>
    <property type="match status" value="1"/>
</dbReference>
<dbReference type="Gene3D" id="1.10.8.50">
    <property type="match status" value="1"/>
</dbReference>
<dbReference type="Gene3D" id="4.10.910.10">
    <property type="entry name" value="30s ribosomal protein s13, domain 2"/>
    <property type="match status" value="1"/>
</dbReference>
<dbReference type="HAMAP" id="MF_01315">
    <property type="entry name" value="Ribosomal_uS13"/>
    <property type="match status" value="1"/>
</dbReference>
<dbReference type="InterPro" id="IPR027437">
    <property type="entry name" value="Rbsml_uS13_C"/>
</dbReference>
<dbReference type="InterPro" id="IPR001892">
    <property type="entry name" value="Ribosomal_uS13"/>
</dbReference>
<dbReference type="InterPro" id="IPR010979">
    <property type="entry name" value="Ribosomal_uS13-like_H2TH"/>
</dbReference>
<dbReference type="InterPro" id="IPR019977">
    <property type="entry name" value="Ribosomal_uS13_archaeal"/>
</dbReference>
<dbReference type="InterPro" id="IPR018269">
    <property type="entry name" value="Ribosomal_uS13_CS"/>
</dbReference>
<dbReference type="NCBIfam" id="NF003140">
    <property type="entry name" value="PRK04053.1"/>
    <property type="match status" value="1"/>
</dbReference>
<dbReference type="NCBIfam" id="TIGR03629">
    <property type="entry name" value="uS13_arch"/>
    <property type="match status" value="1"/>
</dbReference>
<dbReference type="PANTHER" id="PTHR10871">
    <property type="entry name" value="30S RIBOSOMAL PROTEIN S13/40S RIBOSOMAL PROTEIN S18"/>
    <property type="match status" value="1"/>
</dbReference>
<dbReference type="PANTHER" id="PTHR10871:SF3">
    <property type="entry name" value="SMALL RIBOSOMAL SUBUNIT PROTEIN US13"/>
    <property type="match status" value="1"/>
</dbReference>
<dbReference type="Pfam" id="PF00416">
    <property type="entry name" value="Ribosomal_S13"/>
    <property type="match status" value="1"/>
</dbReference>
<dbReference type="PIRSF" id="PIRSF002134">
    <property type="entry name" value="Ribosomal_S13"/>
    <property type="match status" value="1"/>
</dbReference>
<dbReference type="SUPFAM" id="SSF46946">
    <property type="entry name" value="S13-like H2TH domain"/>
    <property type="match status" value="1"/>
</dbReference>
<dbReference type="PROSITE" id="PS00646">
    <property type="entry name" value="RIBOSOMAL_S13_1"/>
    <property type="match status" value="1"/>
</dbReference>
<dbReference type="PROSITE" id="PS50159">
    <property type="entry name" value="RIBOSOMAL_S13_2"/>
    <property type="match status" value="1"/>
</dbReference>
<sequence length="150" mass="17272">MAGETSFKYIVRIAGVDIDGDLKLPYGLASIKGIGYTTAMAVIRMLGLDPEKKVGFLTEEEIRRLDEVLRDITQLGLPKWLYNRRKDYETGKDLHLIGSELIFYARRDIEREMKIGSWRGIRHKYGLKVRGQRTRTTGRLGMTIGVRKKR</sequence>
<evidence type="ECO:0000255" key="1">
    <source>
        <dbReference type="HAMAP-Rule" id="MF_01315"/>
    </source>
</evidence>
<evidence type="ECO:0000305" key="2"/>
<proteinExistence type="inferred from homology"/>
<name>RS13_AERPE</name>
<feature type="chain" id="PRO_0000132176" description="Small ribosomal subunit protein uS13">
    <location>
        <begin position="1"/>
        <end position="150"/>
    </location>
</feature>
<comment type="function">
    <text evidence="1">Located at the top of the head of the 30S subunit, it contacts several helices of the 16S rRNA. In the 70S ribosome it contacts the 23S rRNA (bridge B1a) and protein L5 of the 50S subunit (bridge B1b), connecting the 2 subunits; these bridges are implicated in subunit movement.</text>
</comment>
<comment type="subunit">
    <text evidence="1">Part of the 30S ribosomal subunit. Forms a loose heterodimer with protein S19. Forms two bridges to the 50S subunit in the 70S ribosome.</text>
</comment>
<comment type="similarity">
    <text evidence="1">Belongs to the universal ribosomal protein uS13 family.</text>
</comment>
<keyword id="KW-1185">Reference proteome</keyword>
<keyword id="KW-0687">Ribonucleoprotein</keyword>
<keyword id="KW-0689">Ribosomal protein</keyword>
<keyword id="KW-0694">RNA-binding</keyword>
<keyword id="KW-0699">rRNA-binding</keyword>
<protein>
    <recommendedName>
        <fullName evidence="1">Small ribosomal subunit protein uS13</fullName>
    </recommendedName>
    <alternativeName>
        <fullName evidence="2">30S ribosomal protein S13</fullName>
    </alternativeName>
</protein>
<accession>Q9YB60</accession>